<keyword id="KW-0963">Cytoplasm</keyword>
<keyword id="KW-1185">Reference proteome</keyword>
<keyword id="KW-0677">Repeat</keyword>
<keyword id="KW-0853">WD repeat</keyword>
<evidence type="ECO:0000255" key="1"/>
<evidence type="ECO:0000255" key="2">
    <source>
        <dbReference type="PROSITE-ProRule" id="PRU00026"/>
    </source>
</evidence>
<evidence type="ECO:0000255" key="3">
    <source>
        <dbReference type="PROSITE-ProRule" id="PRU01119"/>
    </source>
</evidence>
<evidence type="ECO:0000256" key="4">
    <source>
        <dbReference type="SAM" id="MobiDB-lite"/>
    </source>
</evidence>
<evidence type="ECO:0000269" key="5">
    <source>
    </source>
</evidence>
<evidence type="ECO:0000269" key="6">
    <source>
    </source>
</evidence>
<evidence type="ECO:0000303" key="7">
    <source>
    </source>
</evidence>
<evidence type="ECO:0000303" key="8">
    <source>
    </source>
</evidence>
<evidence type="ECO:0000305" key="9"/>
<evidence type="ECO:0000312" key="10">
    <source>
        <dbReference type="Araport" id="AT1G03060"/>
    </source>
</evidence>
<evidence type="ECO:0000312" key="11">
    <source>
        <dbReference type="EMBL" id="AAD25803.1"/>
    </source>
</evidence>
<evidence type="ECO:0000312" key="12">
    <source>
        <dbReference type="Proteomes" id="UP000006548"/>
    </source>
</evidence>
<organism evidence="12">
    <name type="scientific">Arabidopsis thaliana</name>
    <name type="common">Mouse-ear cress</name>
    <dbReference type="NCBI Taxonomy" id="3702"/>
    <lineage>
        <taxon>Eukaryota</taxon>
        <taxon>Viridiplantae</taxon>
        <taxon>Streptophyta</taxon>
        <taxon>Embryophyta</taxon>
        <taxon>Tracheophyta</taxon>
        <taxon>Spermatophyta</taxon>
        <taxon>Magnoliopsida</taxon>
        <taxon>eudicotyledons</taxon>
        <taxon>Gunneridae</taxon>
        <taxon>Pentapetalae</taxon>
        <taxon>rosids</taxon>
        <taxon>malvids</taxon>
        <taxon>Brassicales</taxon>
        <taxon>Brassicaceae</taxon>
        <taxon>Camelineae</taxon>
        <taxon>Arabidopsis</taxon>
    </lineage>
</organism>
<gene>
    <name evidence="7" type="primary">SPI</name>
    <name evidence="8" type="synonym">BCHA1</name>
    <name evidence="10" type="ordered locus">At1g03060</name>
    <name evidence="11" type="ORF">F10O3.12</name>
</gene>
<comment type="function">
    <text evidence="5 6">Involved in cell morphogenesis (PubMed:19392685). May have a function in membrane fusion or membrane composition (PubMed:19392685). Required for salt stress tolerance (PubMed:26133670). Regulates the salt stress-dependent post-transcriptional stabilization, cytoplasmic agglomeration, and localization to P-bodies of a subset of salt stress-regulated mRNAs (PubMed:26133670).</text>
</comment>
<comment type="subunit">
    <text evidence="6">Interacts with DCP1.</text>
</comment>
<comment type="interaction">
    <interactant intactId="EBI-3386960">
        <id>F4HZB2</id>
    </interactant>
    <interactant intactId="EBI-7786643">
        <id>Q9SJF3</id>
        <label>At1g08370</label>
    </interactant>
    <organismsDiffer>false</organismsDiffer>
    <experiments>5</experiments>
</comment>
<comment type="interaction">
    <interactant intactId="EBI-3386960">
        <id>F4HZB2</id>
    </interactant>
    <interactant intactId="EBI-38519">
        <id>Q12517</id>
        <label>DCP1</label>
    </interactant>
    <organismsDiffer>true</organismsDiffer>
    <experiments>2</experiments>
</comment>
<comment type="interaction">
    <interactant intactId="EBI-3386960">
        <id>F4HZB2</id>
    </interactant>
    <interactant intactId="EBI-374238">
        <id>Q9NPI6</id>
        <label>DCP1A</label>
    </interactant>
    <organismsDiffer>true</organismsDiffer>
    <experiments>2</experiments>
</comment>
<comment type="interaction">
    <interactant intactId="EBI-3386960">
        <id>F4HZB2</id>
    </interactant>
    <interactant intactId="EBI-521595">
        <id>Q8IZD4</id>
        <label>DCP1B</label>
    </interactant>
    <organismsDiffer>true</organismsDiffer>
    <experiments>2</experiments>
</comment>
<comment type="subcellular location">
    <subcellularLocation>
        <location evidence="6">Cytoplasm</location>
    </subcellularLocation>
    <subcellularLocation>
        <location evidence="6">Cytoplasm</location>
        <location evidence="6">P-body</location>
    </subcellularLocation>
    <text evidence="6">Recruited to P-bodies by DCP1 in a salt stress-dependent manner.</text>
</comment>
<comment type="tissue specificity">
    <text evidence="5">Expressed in flowers, leaves, stems, hypocotyls and roots.</text>
</comment>
<comment type="disruption phenotype">
    <text evidence="5 6">Distorted trichomes, decreased lobing of epidermal pavement cells, disconnected epidermal cells on various organs and shorter root hairs (PubMed:19392685). Fragmented vacuoles in root hairs (PubMed:19392685). Salt hypersensitivity.</text>
</comment>
<comment type="sequence caution" evidence="9">
    <conflict type="erroneous gene model prediction">
        <sequence resource="EMBL-CDS" id="AAD25803"/>
    </conflict>
</comment>
<accession>F4HZB2</accession>
<accession>Q9SA64</accession>
<dbReference type="EMBL" id="AC006550">
    <property type="protein sequence ID" value="AAD25803.1"/>
    <property type="status" value="ALT_SEQ"/>
    <property type="molecule type" value="Genomic_DNA"/>
</dbReference>
<dbReference type="EMBL" id="CP002684">
    <property type="protein sequence ID" value="AEE27523.1"/>
    <property type="molecule type" value="Genomic_DNA"/>
</dbReference>
<dbReference type="PIR" id="D86161">
    <property type="entry name" value="D86161"/>
</dbReference>
<dbReference type="RefSeq" id="NP_001322129.1">
    <property type="nucleotide sequence ID" value="NM_001331381.1"/>
</dbReference>
<dbReference type="RefSeq" id="NP_171805.1">
    <property type="nucleotide sequence ID" value="NM_100188.1"/>
</dbReference>
<dbReference type="SMR" id="F4HZB2"/>
<dbReference type="DIP" id="DIP-61571N"/>
<dbReference type="FunCoup" id="F4HZB2">
    <property type="interactions" value="2346"/>
</dbReference>
<dbReference type="IntAct" id="F4HZB2">
    <property type="interactions" value="5"/>
</dbReference>
<dbReference type="STRING" id="3702.F4HZB2"/>
<dbReference type="iPTMnet" id="F4HZB2"/>
<dbReference type="PaxDb" id="3702-AT1G03060.1"/>
<dbReference type="ProteomicsDB" id="240648"/>
<dbReference type="EnsemblPlants" id="AT1G03060.1">
    <property type="protein sequence ID" value="AT1G03060.1"/>
    <property type="gene ID" value="AT1G03060"/>
</dbReference>
<dbReference type="GeneID" id="839323"/>
<dbReference type="Gramene" id="AT1G03060.1">
    <property type="protein sequence ID" value="AT1G03060.1"/>
    <property type="gene ID" value="AT1G03060"/>
</dbReference>
<dbReference type="KEGG" id="ath:AT1G03060"/>
<dbReference type="Araport" id="AT1G03060"/>
<dbReference type="TAIR" id="AT1G03060">
    <property type="gene designation" value="SPI"/>
</dbReference>
<dbReference type="eggNOG" id="KOG1786">
    <property type="taxonomic scope" value="Eukaryota"/>
</dbReference>
<dbReference type="eggNOG" id="KOG1788">
    <property type="taxonomic scope" value="Eukaryota"/>
</dbReference>
<dbReference type="HOGENOM" id="CLU_000175_4_0_1"/>
<dbReference type="InParanoid" id="F4HZB2"/>
<dbReference type="PRO" id="PR:F4HZB2"/>
<dbReference type="Proteomes" id="UP000006548">
    <property type="component" value="Chromosome 1"/>
</dbReference>
<dbReference type="ExpressionAtlas" id="F4HZB2">
    <property type="expression patterns" value="baseline and differential"/>
</dbReference>
<dbReference type="GO" id="GO:0005737">
    <property type="term" value="C:cytoplasm"/>
    <property type="evidence" value="ECO:0000314"/>
    <property type="project" value="TAIR"/>
</dbReference>
<dbReference type="GO" id="GO:0000932">
    <property type="term" value="C:P-body"/>
    <property type="evidence" value="ECO:0000314"/>
    <property type="project" value="TAIR"/>
</dbReference>
<dbReference type="GO" id="GO:0035619">
    <property type="term" value="C:root hair tip"/>
    <property type="evidence" value="ECO:0000314"/>
    <property type="project" value="TAIR"/>
</dbReference>
<dbReference type="GO" id="GO:0071472">
    <property type="term" value="P:cellular response to salt stress"/>
    <property type="evidence" value="ECO:0000315"/>
    <property type="project" value="TAIR"/>
</dbReference>
<dbReference type="GO" id="GO:0080001">
    <property type="term" value="P:mucilage extrusion from seed coat"/>
    <property type="evidence" value="ECO:0000316"/>
    <property type="project" value="TAIR"/>
</dbReference>
<dbReference type="GO" id="GO:0009825">
    <property type="term" value="P:multidimensional cell growth"/>
    <property type="evidence" value="ECO:0000315"/>
    <property type="project" value="TAIR"/>
</dbReference>
<dbReference type="GO" id="GO:0033962">
    <property type="term" value="P:P-body assembly"/>
    <property type="evidence" value="ECO:0000315"/>
    <property type="project" value="TAIR"/>
</dbReference>
<dbReference type="GO" id="GO:1902892">
    <property type="term" value="P:positive regulation of root hair elongation"/>
    <property type="evidence" value="ECO:0000315"/>
    <property type="project" value="TAIR"/>
</dbReference>
<dbReference type="GO" id="GO:1904580">
    <property type="term" value="P:regulation of intracellular mRNA localization"/>
    <property type="evidence" value="ECO:0000315"/>
    <property type="project" value="TAIR"/>
</dbReference>
<dbReference type="GO" id="GO:1903335">
    <property type="term" value="P:regulation of vacuolar transport"/>
    <property type="evidence" value="ECO:0000316"/>
    <property type="project" value="TAIR"/>
</dbReference>
<dbReference type="GO" id="GO:0010090">
    <property type="term" value="P:trichome morphogenesis"/>
    <property type="evidence" value="ECO:0000315"/>
    <property type="project" value="TAIR"/>
</dbReference>
<dbReference type="GO" id="GO:0007033">
    <property type="term" value="P:vacuole organization"/>
    <property type="evidence" value="ECO:0000315"/>
    <property type="project" value="TAIR"/>
</dbReference>
<dbReference type="CDD" id="cd06071">
    <property type="entry name" value="Beach"/>
    <property type="match status" value="1"/>
</dbReference>
<dbReference type="CDD" id="cd01201">
    <property type="entry name" value="PH_BEACH"/>
    <property type="match status" value="1"/>
</dbReference>
<dbReference type="FunFam" id="2.130.10.10:FF:000885">
    <property type="entry name" value="BEACH-DOMAIN HOMOLOG A1"/>
    <property type="match status" value="1"/>
</dbReference>
<dbReference type="FunFam" id="2.60.120.200:FF:000282">
    <property type="entry name" value="BEACH-DOMAIN HOMOLOG A1"/>
    <property type="match status" value="1"/>
</dbReference>
<dbReference type="FunFam" id="1.10.1540.10:FF:000002">
    <property type="entry name" value="WD repeat and FYVE domain containing 3"/>
    <property type="match status" value="1"/>
</dbReference>
<dbReference type="Gene3D" id="2.60.120.200">
    <property type="match status" value="1"/>
</dbReference>
<dbReference type="Gene3D" id="1.10.1540.10">
    <property type="entry name" value="BEACH domain"/>
    <property type="match status" value="1"/>
</dbReference>
<dbReference type="Gene3D" id="1.25.10.10">
    <property type="entry name" value="Leucine-rich Repeat Variant"/>
    <property type="match status" value="1"/>
</dbReference>
<dbReference type="Gene3D" id="2.30.29.30">
    <property type="entry name" value="Pleckstrin-homology domain (PH domain)/Phosphotyrosine-binding domain (PTB)"/>
    <property type="match status" value="1"/>
</dbReference>
<dbReference type="Gene3D" id="2.130.10.10">
    <property type="entry name" value="YVTN repeat-like/Quinoprotein amine dehydrogenase"/>
    <property type="match status" value="1"/>
</dbReference>
<dbReference type="InterPro" id="IPR056252">
    <property type="entry name" value="Alfy-like_Arm-like"/>
</dbReference>
<dbReference type="InterPro" id="IPR011989">
    <property type="entry name" value="ARM-like"/>
</dbReference>
<dbReference type="InterPro" id="IPR016024">
    <property type="entry name" value="ARM-type_fold"/>
</dbReference>
<dbReference type="InterPro" id="IPR000409">
    <property type="entry name" value="BEACH_dom"/>
</dbReference>
<dbReference type="InterPro" id="IPR036372">
    <property type="entry name" value="BEACH_dom_sf"/>
</dbReference>
<dbReference type="InterPro" id="IPR051944">
    <property type="entry name" value="BEACH_domain_protein"/>
</dbReference>
<dbReference type="InterPro" id="IPR013320">
    <property type="entry name" value="ConA-like_dom_sf"/>
</dbReference>
<dbReference type="InterPro" id="IPR023362">
    <property type="entry name" value="PH-BEACH_dom"/>
</dbReference>
<dbReference type="InterPro" id="IPR011993">
    <property type="entry name" value="PH-like_dom_sf"/>
</dbReference>
<dbReference type="InterPro" id="IPR015943">
    <property type="entry name" value="WD40/YVTN_repeat-like_dom_sf"/>
</dbReference>
<dbReference type="InterPro" id="IPR019775">
    <property type="entry name" value="WD40_repeat_CS"/>
</dbReference>
<dbReference type="InterPro" id="IPR036322">
    <property type="entry name" value="WD40_repeat_dom_sf"/>
</dbReference>
<dbReference type="InterPro" id="IPR001680">
    <property type="entry name" value="WD40_rpt"/>
</dbReference>
<dbReference type="PANTHER" id="PTHR46108">
    <property type="entry name" value="BLUE CHEESE"/>
    <property type="match status" value="1"/>
</dbReference>
<dbReference type="PANTHER" id="PTHR46108:SF4">
    <property type="entry name" value="BLUE CHEESE"/>
    <property type="match status" value="1"/>
</dbReference>
<dbReference type="Pfam" id="PF23295">
    <property type="entry name" value="Arm_4"/>
    <property type="match status" value="1"/>
</dbReference>
<dbReference type="Pfam" id="PF02138">
    <property type="entry name" value="Beach"/>
    <property type="match status" value="1"/>
</dbReference>
<dbReference type="Pfam" id="PF14844">
    <property type="entry name" value="PH_BEACH"/>
    <property type="match status" value="1"/>
</dbReference>
<dbReference type="Pfam" id="PF00400">
    <property type="entry name" value="WD40"/>
    <property type="match status" value="2"/>
</dbReference>
<dbReference type="SMART" id="SM01026">
    <property type="entry name" value="Beach"/>
    <property type="match status" value="1"/>
</dbReference>
<dbReference type="SMART" id="SM00320">
    <property type="entry name" value="WD40"/>
    <property type="match status" value="4"/>
</dbReference>
<dbReference type="SUPFAM" id="SSF48371">
    <property type="entry name" value="ARM repeat"/>
    <property type="match status" value="2"/>
</dbReference>
<dbReference type="SUPFAM" id="SSF81837">
    <property type="entry name" value="BEACH domain"/>
    <property type="match status" value="1"/>
</dbReference>
<dbReference type="SUPFAM" id="SSF49899">
    <property type="entry name" value="Concanavalin A-like lectins/glucanases"/>
    <property type="match status" value="1"/>
</dbReference>
<dbReference type="SUPFAM" id="SSF50729">
    <property type="entry name" value="PH domain-like"/>
    <property type="match status" value="1"/>
</dbReference>
<dbReference type="SUPFAM" id="SSF50978">
    <property type="entry name" value="WD40 repeat-like"/>
    <property type="match status" value="1"/>
</dbReference>
<dbReference type="PROSITE" id="PS50197">
    <property type="entry name" value="BEACH"/>
    <property type="match status" value="1"/>
</dbReference>
<dbReference type="PROSITE" id="PS51783">
    <property type="entry name" value="PH_BEACH"/>
    <property type="match status" value="1"/>
</dbReference>
<dbReference type="PROSITE" id="PS00678">
    <property type="entry name" value="WD_REPEATS_1"/>
    <property type="match status" value="1"/>
</dbReference>
<dbReference type="PROSITE" id="PS50082">
    <property type="entry name" value="WD_REPEATS_2"/>
    <property type="match status" value="1"/>
</dbReference>
<dbReference type="PROSITE" id="PS50294">
    <property type="entry name" value="WD_REPEATS_REGION"/>
    <property type="match status" value="1"/>
</dbReference>
<protein>
    <recommendedName>
        <fullName evidence="7">Protein SPIRRIG</fullName>
    </recommendedName>
    <alternativeName>
        <fullName evidence="8">BEACH domain-containing protein A1</fullName>
    </alternativeName>
    <alternativeName>
        <fullName evidence="9">BEACH-domain homolog A1</fullName>
    </alternativeName>
</protein>
<sequence length="3601" mass="400894">MKWATLLKDIKEKVGLAQSSDSDPFPVDLTAPPSSSSSSSSPSFTYPSSSSLHHFNFSPSSRDNHELELDFKRLWEEFRSSSSEKEKEAALNLTVDIFCRLVKRHANVDQLVTMLVETHIFSFVIGRAFVTDIEKLKIGSKTRSLNVEKVLRFFSDVTKEGFSPGANLLTAVEVLVSGPIDKQSLLDSGIFCCLIHVLIALLAYDELSKSKITGDLEVVSAEKDAGYIVLQTRRLEVEGSVVHIMKALASNPSAAQSLIEDDSLESLFNMVANGSITVFSQYKEGLVPLHNIQLHRHAMQILGLLLVNDNGSTARYIRKHHLIKVLLMAVKEFDPSCGDSAYTMGIVDLLLECVELSYRPEAGGVRLREDIRNAHGYHFLVQFALVLSSLPKNPIFVSSNHDSGSDDPEVFHDGENTNSTENADFSSQNFAPSLSRLLDVLVTLAQTGPAEPSVGRASRSSQTKPTGHSRSRTSSVDSIYDETWEQGSGKVKDLEAVQMLQDIFLKAENKDLQAEVLNRMFKIFSSHVENYRLCQELRTVPLLVLNMAGFPSSLQDIILKILEYAVTVVNCVPEQELLSLCCLLQQPITSQLKHTILSFFVKLISFDQQYKKVLREVGVLEVLQDDLKQHKLLIGPDQYSGVSSHSDRKPSSGSFRKNLDTKDAIISSPKLMESGSGKLPVFEVDNTITVGWDCLISLLKKAEANQSSFRAANGVAIILPFLISDAHRSGVLRILSCLITEDTKQVHHDELGAVVDLLKSGMVTGISGHQYKLHDDAKCDTMGALWRIVGVNGSAQRVFGEATGFSLLLTTLHTFQGKREHMDESDLTVYIKLFKYLFRLMTAAVCENAVNRMKLHAVITSQTFFELLAESGLLCVELERQVIQLLLELALEVVVPPFLTSESTALATIPENENTTFVVTTPSGQFNPDKERIYNAGAVRVLIRSLLLFSPKMQLEFLRLLESLARASPFNQENLTSIGCVELLLEIIYPFLAGSSPFLSYALKIVEILGAYRLSPSELRMLFRYVLQMRIMNSGHAIVGMMEKLILMEDTALEHLSLAPFVELDMSKTGHASVQVSLGERSWPPAAGYSFVCWFQFRNFLTTQGKESEASKAGGSSKTRMTSAQQHEQNIFRMFSVGAVSNESPFYAELYFQEDGILTLATSNSHSLSFSGLEIEEGRWHHLAVVHSKPNALAGLFQASVAYVYLDGKLRHTGKLGYSPSPVGKSLQVTVGTPATCARVSDLTWKTRSCYLFEEVLTSGCIGFMYILGRGYKGLFQDADLLRFVPNQACGGGSMAILDSLDTDMTSSSNGQKFDGSNRQGDSKADGSGIVWDLERLGNLAFQLPGKKLIFAFDGTCSEFIRASGNFSLLNLVDPLSAAASPIGGIPRFGRLVGNVSICRQSVIGDTIRPVGGMTVVLALVEAAESRNMLHMALSLLACALHQNPQNVKDMQTIRGYHLLALFLRPKMTLFDMQSLEIFFQIAACEALFSEPKKLESVQSNITMPPTETIFENSYEDLSLSRFRYDSSSVGSHGDMDDFSVPKDSFSHLSELETDIPVETSNCIVLSNADMVEHVLLDWTLWVTSPVSIQIALLGFLENLVSMHWYRNHNLTILRRINLVEHLLVTLQRGDVEVPVLEKLVVLLGCILEDGFLTSELENVVRFVIMTFNPPEVKSRSSLLRESMGKHVIVRNMLLEMLIDLQVTIKAEDLLELWHKIVSSKLITYFLDEAVHPTSMRWIMTLLGVCLASSPNFSLKFRTSGGYQGLLRVLQNFYDSPDIYYILFCLIFGKPVYPRLPEVRMLDFHALVPNDGSYVELKFIELLDSVVAMAKSTYDRLIMQSMLAHQSGNLSQVSASLVAELIEGAEMTGELQGEALMHKTYAARLMGGEASAPAAATSVLRFMVDLAKMCPQFSTACRRAEFVENCADLYFSCVRAAYAVKMAKQLSVKAEEKHINDADDSGSQGSLPHDQDQSTKTSISVGSFPQGQVSLGSEDMSLPANYVVNDKMENILPPPTQDTSKSLQGVEDVKKQDDHHVGPSASSERDFQDFTGNPVQVQATDSQSSASFPMIESPLLSEKSSLKVSFTPSPSPVVALASWLGSNYNESKSSTLGSPSLESYVSVNEVDASSERKSGSQGSSAANAFFTVSPKLLLETDETGYGGGPCSAGASAVLDFMAEALADLVTEQIKAVPVLESILEMVPFYVDPESVLVFQGLCLSRVMNYLERRLLRDDEEDEKKLDKAKWSVNLDAFCWMIVDRVYMGAFSQPAGVLRALEFLLSMLQLANKDGRVEEVTPSGKGLLSLGRATRQLDAYVHSILKNTNRMVLYCFLPSFLITIGEEDLLSQLGLLVESKKRPSPNPATDESGIDISTVLQLLVANRRIIFCPSNLDTDLNCCLCVNLISLLLDQRKSVQNMSLDIVKYLLVHRRSALEDLLVTKPNQGQNFDVLHGGFDKLLTGNLPEFFKWLESSDKIINKVLEQCAAIMWVQYIAGSAKFPGVRIKGMEGRRKREMGRKSRDMSKLDLKHWDQLNERRYALEVLRDAMSTELRVVRQNKYGWILHAESEWQTHLQQLVHERGIFPMRKSKGTEDPEWQLCPIEGPYRMRKKLERCKLKIDSIQNVLDGKLELGEIELPKVKNEDGPVISDTDSEPPFLLSELYDESFLKESDDFKDVASARNGWNDDRASSTNEASLHSALDFGGKSSIASVPITDTTHVKSETGSPRHSSSAKMDETNGREEKSEKELNDDGEYLIRPYLEHLEKIRFRYNCERVVDLDKHDGIFLIGEFCLYVIENFYIDEDGCICEKECEDELSVIDQALGVKKDVSGSSDFHSKSSTSWTTTVKTGAVGGRAWAYGGGAWGKEKMCMTGNLPHPWRMWKLNNVHEILKRDYQLRPVAIEIFSMDGCNDLLVFHKKEREEVFKNLVAMNLPRNSMLDTTISGSAKQESNEGGRLFKLMAKSFSKRWQNGEISNFQYLMHLNTLAGRGYSDLTQYPVFPWVLADYDSESLDFSDPKTFRKLHKPMGCQTPEGEEEFRKRYESWDDPEVPKFHYGSHYSSAGIVLFYLIRLPPFSSENQKLQGGQFDHADRLFNSIKDTWLSAAGKGNTSDVKELIPEFFYMPEFLENRFSLDLGEKQSGEKVGDVFLPPWARGSVREFILKHREALESDYVSENLHHWIDLIFGYKQRGKAAEEAVNVFYHYTYEGNVDIDAVTDPAMKASILAQINHFGQTPKQLFPKAHVKRRTDRKIPLHPLKHSMHLVPHEIRKCSSSISQIITFHDKVLVAGANCFLKPRGYTKYITWGFPDRSLRFMSYDQDKLLSTHENLHESNQIQCAGVSHDGRIVVTGAEDGLVCVWRVSKDGPRGSRRLRLEKALCAHTAKVTCLRVSQPYMMIASGSDDCTVIIWDLSSLSFVRQLPDFPVPISAIYINDLTGEIVTAAGTVLAVWSINGDCLAVANTSQLPSDSVLSVTGSTSSDWLETSWYVTGHQSGAVKVWRMIHCTDPVSAESKTSSSNRTGGLNLGDQVPEYKLILHKVLKFHKQPVTALHLTSDLKQLLSGDSAGQLLSWTVPDETLRASMKQASLKQASLKQASLKQASSV</sequence>
<feature type="chain" id="PRO_0000434032" description="Protein SPIRRIG" evidence="1">
    <location>
        <begin position="1"/>
        <end position="3601"/>
    </location>
</feature>
<feature type="domain" description="BEACH-type PH" evidence="3">
    <location>
        <begin position="2760"/>
        <end position="2927"/>
    </location>
</feature>
<feature type="domain" description="BEACH" evidence="2">
    <location>
        <begin position="2952"/>
        <end position="3244"/>
    </location>
</feature>
<feature type="repeat" description="WD 1" evidence="1">
    <location>
        <begin position="3328"/>
        <end position="3367"/>
    </location>
</feature>
<feature type="repeat" description="WD 2" evidence="1">
    <location>
        <begin position="3378"/>
        <end position="3417"/>
    </location>
</feature>
<feature type="repeat" description="WD 3" evidence="1">
    <location>
        <begin position="3464"/>
        <end position="3507"/>
    </location>
</feature>
<feature type="repeat" description="WD 4" evidence="1">
    <location>
        <begin position="3540"/>
        <end position="3579"/>
    </location>
</feature>
<feature type="region of interest" description="Disordered" evidence="4">
    <location>
        <begin position="17"/>
        <end position="50"/>
    </location>
</feature>
<feature type="region of interest" description="Disordered" evidence="4">
    <location>
        <begin position="398"/>
        <end position="426"/>
    </location>
</feature>
<feature type="region of interest" description="Disordered" evidence="4">
    <location>
        <begin position="449"/>
        <end position="476"/>
    </location>
</feature>
<feature type="region of interest" description="Disordered" evidence="4">
    <location>
        <begin position="638"/>
        <end position="657"/>
    </location>
</feature>
<feature type="region of interest" description="Disordered" evidence="4">
    <location>
        <begin position="1954"/>
        <end position="1993"/>
    </location>
</feature>
<feature type="region of interest" description="Disordered" evidence="4">
    <location>
        <begin position="2009"/>
        <end position="2049"/>
    </location>
</feature>
<feature type="region of interest" description="Disordered" evidence="4">
    <location>
        <begin position="2715"/>
        <end position="2747"/>
    </location>
</feature>
<feature type="compositionally biased region" description="Low complexity" evidence="4">
    <location>
        <begin position="32"/>
        <end position="50"/>
    </location>
</feature>
<feature type="compositionally biased region" description="Polar residues" evidence="4">
    <location>
        <begin position="416"/>
        <end position="426"/>
    </location>
</feature>
<feature type="compositionally biased region" description="Polar residues" evidence="4">
    <location>
        <begin position="458"/>
        <end position="476"/>
    </location>
</feature>
<feature type="compositionally biased region" description="Polar residues" evidence="4">
    <location>
        <begin position="1974"/>
        <end position="1991"/>
    </location>
</feature>
<feature type="compositionally biased region" description="Basic and acidic residues" evidence="4">
    <location>
        <begin position="2027"/>
        <end position="2048"/>
    </location>
</feature>
<feature type="compositionally biased region" description="Polar residues" evidence="4">
    <location>
        <begin position="2715"/>
        <end position="2731"/>
    </location>
</feature>
<feature type="compositionally biased region" description="Basic and acidic residues" evidence="4">
    <location>
        <begin position="2732"/>
        <end position="2747"/>
    </location>
</feature>
<proteinExistence type="evidence at protein level"/>
<name>BCHA1_ARATH</name>
<reference key="1">
    <citation type="journal article" date="2000" name="Nature">
        <title>Sequence and analysis of chromosome 1 of the plant Arabidopsis thaliana.</title>
        <authorList>
            <person name="Theologis A."/>
            <person name="Ecker J.R."/>
            <person name="Palm C.J."/>
            <person name="Federspiel N.A."/>
            <person name="Kaul S."/>
            <person name="White O."/>
            <person name="Alonso J."/>
            <person name="Altafi H."/>
            <person name="Araujo R."/>
            <person name="Bowman C.L."/>
            <person name="Brooks S.Y."/>
            <person name="Buehler E."/>
            <person name="Chan A."/>
            <person name="Chao Q."/>
            <person name="Chen H."/>
            <person name="Cheuk R.F."/>
            <person name="Chin C.W."/>
            <person name="Chung M.K."/>
            <person name="Conn L."/>
            <person name="Conway A.B."/>
            <person name="Conway A.R."/>
            <person name="Creasy T.H."/>
            <person name="Dewar K."/>
            <person name="Dunn P."/>
            <person name="Etgu P."/>
            <person name="Feldblyum T.V."/>
            <person name="Feng J.-D."/>
            <person name="Fong B."/>
            <person name="Fujii C.Y."/>
            <person name="Gill J.E."/>
            <person name="Goldsmith A.D."/>
            <person name="Haas B."/>
            <person name="Hansen N.F."/>
            <person name="Hughes B."/>
            <person name="Huizar L."/>
            <person name="Hunter J.L."/>
            <person name="Jenkins J."/>
            <person name="Johnson-Hopson C."/>
            <person name="Khan S."/>
            <person name="Khaykin E."/>
            <person name="Kim C.J."/>
            <person name="Koo H.L."/>
            <person name="Kremenetskaia I."/>
            <person name="Kurtz D.B."/>
            <person name="Kwan A."/>
            <person name="Lam B."/>
            <person name="Langin-Hooper S."/>
            <person name="Lee A."/>
            <person name="Lee J.M."/>
            <person name="Lenz C.A."/>
            <person name="Li J.H."/>
            <person name="Li Y.-P."/>
            <person name="Lin X."/>
            <person name="Liu S.X."/>
            <person name="Liu Z.A."/>
            <person name="Luros J.S."/>
            <person name="Maiti R."/>
            <person name="Marziali A."/>
            <person name="Militscher J."/>
            <person name="Miranda M."/>
            <person name="Nguyen M."/>
            <person name="Nierman W.C."/>
            <person name="Osborne B.I."/>
            <person name="Pai G."/>
            <person name="Peterson J."/>
            <person name="Pham P.K."/>
            <person name="Rizzo M."/>
            <person name="Rooney T."/>
            <person name="Rowley D."/>
            <person name="Sakano H."/>
            <person name="Salzberg S.L."/>
            <person name="Schwartz J.R."/>
            <person name="Shinn P."/>
            <person name="Southwick A.M."/>
            <person name="Sun H."/>
            <person name="Tallon L.J."/>
            <person name="Tambunga G."/>
            <person name="Toriumi M.J."/>
            <person name="Town C.D."/>
            <person name="Utterback T."/>
            <person name="Van Aken S."/>
            <person name="Vaysberg M."/>
            <person name="Vysotskaia V.S."/>
            <person name="Walker M."/>
            <person name="Wu D."/>
            <person name="Yu G."/>
            <person name="Fraser C.M."/>
            <person name="Venter J.C."/>
            <person name="Davis R.W."/>
        </authorList>
    </citation>
    <scope>NUCLEOTIDE SEQUENCE [LARGE SCALE GENOMIC DNA]</scope>
    <source>
        <strain>cv. Columbia</strain>
    </source>
</reference>
<reference key="2">
    <citation type="journal article" date="2017" name="Plant J.">
        <title>Araport11: a complete reannotation of the Arabidopsis thaliana reference genome.</title>
        <authorList>
            <person name="Cheng C.Y."/>
            <person name="Krishnakumar V."/>
            <person name="Chan A.P."/>
            <person name="Thibaud-Nissen F."/>
            <person name="Schobel S."/>
            <person name="Town C.D."/>
        </authorList>
    </citation>
    <scope>GENOME REANNOTATION</scope>
    <source>
        <strain>cv. Columbia</strain>
    </source>
</reference>
<reference key="3">
    <citation type="journal article" date="2009" name="Plant J.">
        <title>The cell morphogenesis gene SPIRRIG in Arabidopsis encodes a WD/BEACH domain protein.</title>
        <authorList>
            <person name="Saedler R."/>
            <person name="Jakoby M."/>
            <person name="Marin B."/>
            <person name="Galiana-Jaime E."/>
            <person name="Hulskamp M."/>
        </authorList>
    </citation>
    <scope>NUCLEOTIDE SEQUENCE [MRNA]</scope>
    <scope>FUNCTION</scope>
    <scope>TISSUE SPECIFICITY</scope>
    <scope>DISRUPTION PHENOTYPE</scope>
</reference>
<reference key="4">
    <citation type="journal article" date="2015" name="Mol. Plant">
        <title>BEACH-domain proteins act together in a cascade to mediate vacuolar protein trafficking and disease resistance in Arabidopsis.</title>
        <authorList>
            <person name="Teh O.K."/>
            <person name="Hatsugai N."/>
            <person name="Tamura K."/>
            <person name="Fuji K."/>
            <person name="Tabata R."/>
            <person name="Yamaguchi K."/>
            <person name="Shingenobu S."/>
            <person name="Yamada M."/>
            <person name="Hasebe M."/>
            <person name="Sawa S."/>
            <person name="Shimada T."/>
            <person name="Hara-Nishimura I."/>
        </authorList>
    </citation>
    <scope>GENE FAMILY</scope>
    <scope>NOMENCLATURE</scope>
</reference>
<reference key="5">
    <citation type="journal article" date="2015" name="PLoS Biol.">
        <title>The BEACH domain protein SPIRRIG is essential for Arabidopsis salt stress tolerance and functions as a regulator of transcript stabilization and localization.</title>
        <authorList>
            <person name="Steffens A."/>
            <person name="Braeutigam A."/>
            <person name="Jakoby M."/>
            <person name="Huelskamp M."/>
        </authorList>
    </citation>
    <scope>FUNCTION</scope>
    <scope>DISRUPTION PHENOTYPE</scope>
    <scope>INTERACTION WITH DCP1</scope>
    <scope>SUBCELLULAR LOCATION</scope>
</reference>